<sequence length="609" mass="68991">MFDAKNFLANVTHQPGVYRMFDEKGQVIYVGKAKDLKKRLSSYFRTNLNSKKTSALVSHIHSIETTITASETEALLLEHNYIKAFQPRYNVLLRDDKSYPYILLTKERHPRITSHRGSKKVQGEYFGPYPHAGAVRETLSLLQKLFPIRQCENSVYNNRSRPCLQYQIGRCSGPCIDGLVSDEEYQQQVDFARLFLQGKDQQVLEHLIKKMEQASMQLNFEQAAYFRDQIQAIRAVIEKQFVSNERLDDMDILAIAYQLGIACVQVLFIRQGKVLGNRSYFPKVPANTDLSELTETFVGQFYLQGHQGRIIPSTIIVDHVLNEKHELEVLLTEQAGRKVNIQDNVKGNKSKFLHLAQMNAQAALVTQLKQANLIQERYQALQELLSLTTIKRMECFDISHTMGEQTIASCVVFDTEGPLKSDYRRFNISGITAGDDYAAMEQALLKRYDRPLENEKIPDIIFIDGGKGQLNRALQVFAQLNVSWDKNKPILIGVAKGVDRKAGLETLIISKQNKEVNLLPDSLALHLIQHIRDESHYHAIGGHRKKRQQAFTQSGLEAIEGVGAKRRQALLKYLGGMQGVKNATLAEISSVPGISAALAERIYETLRSE</sequence>
<feature type="chain" id="PRO_0000264899" description="UvrABC system protein C">
    <location>
        <begin position="1"/>
        <end position="609"/>
    </location>
</feature>
<feature type="domain" description="GIY-YIG" evidence="1">
    <location>
        <begin position="13"/>
        <end position="91"/>
    </location>
</feature>
<feature type="domain" description="UVR" evidence="1">
    <location>
        <begin position="201"/>
        <end position="236"/>
    </location>
</feature>
<accession>Q0I2X4</accession>
<keyword id="KW-0963">Cytoplasm</keyword>
<keyword id="KW-0227">DNA damage</keyword>
<keyword id="KW-0228">DNA excision</keyword>
<keyword id="KW-0234">DNA repair</keyword>
<keyword id="KW-0267">Excision nuclease</keyword>
<keyword id="KW-0742">SOS response</keyword>
<organism>
    <name type="scientific">Histophilus somni (strain 129Pt)</name>
    <name type="common">Haemophilus somnus</name>
    <dbReference type="NCBI Taxonomy" id="205914"/>
    <lineage>
        <taxon>Bacteria</taxon>
        <taxon>Pseudomonadati</taxon>
        <taxon>Pseudomonadota</taxon>
        <taxon>Gammaproteobacteria</taxon>
        <taxon>Pasteurellales</taxon>
        <taxon>Pasteurellaceae</taxon>
        <taxon>Histophilus</taxon>
    </lineage>
</organism>
<proteinExistence type="inferred from homology"/>
<gene>
    <name evidence="1" type="primary">uvrC</name>
    <name type="ordered locus">HS_0659</name>
</gene>
<name>UVRC_HISS1</name>
<reference key="1">
    <citation type="journal article" date="2007" name="J. Bacteriol.">
        <title>Complete genome sequence of Haemophilus somnus (Histophilus somni) strain 129Pt and comparison to Haemophilus ducreyi 35000HP and Haemophilus influenzae Rd.</title>
        <authorList>
            <person name="Challacombe J.F."/>
            <person name="Duncan A.J."/>
            <person name="Brettin T.S."/>
            <person name="Bruce D."/>
            <person name="Chertkov O."/>
            <person name="Detter J.C."/>
            <person name="Han C.S."/>
            <person name="Misra M."/>
            <person name="Richardson P."/>
            <person name="Tapia R."/>
            <person name="Thayer N."/>
            <person name="Xie G."/>
            <person name="Inzana T.J."/>
        </authorList>
    </citation>
    <scope>NUCLEOTIDE SEQUENCE [LARGE SCALE GENOMIC DNA]</scope>
    <source>
        <strain>129Pt</strain>
    </source>
</reference>
<comment type="function">
    <text evidence="1">The UvrABC repair system catalyzes the recognition and processing of DNA lesions. UvrC both incises the 5' and 3' sides of the lesion. The N-terminal half is responsible for the 3' incision and the C-terminal half is responsible for the 5' incision.</text>
</comment>
<comment type="subunit">
    <text evidence="1">Interacts with UvrB in an incision complex.</text>
</comment>
<comment type="subcellular location">
    <subcellularLocation>
        <location evidence="1">Cytoplasm</location>
    </subcellularLocation>
</comment>
<comment type="similarity">
    <text evidence="1">Belongs to the UvrC family.</text>
</comment>
<evidence type="ECO:0000255" key="1">
    <source>
        <dbReference type="HAMAP-Rule" id="MF_00203"/>
    </source>
</evidence>
<protein>
    <recommendedName>
        <fullName evidence="1">UvrABC system protein C</fullName>
        <shortName evidence="1">Protein UvrC</shortName>
    </recommendedName>
    <alternativeName>
        <fullName evidence="1">Excinuclease ABC subunit C</fullName>
    </alternativeName>
</protein>
<dbReference type="EMBL" id="CP000436">
    <property type="protein sequence ID" value="ABI24936.1"/>
    <property type="molecule type" value="Genomic_DNA"/>
</dbReference>
<dbReference type="SMR" id="Q0I2X4"/>
<dbReference type="KEGG" id="hso:HS_0659"/>
<dbReference type="eggNOG" id="COG0322">
    <property type="taxonomic scope" value="Bacteria"/>
</dbReference>
<dbReference type="HOGENOM" id="CLU_014841_3_2_6"/>
<dbReference type="GO" id="GO:0005737">
    <property type="term" value="C:cytoplasm"/>
    <property type="evidence" value="ECO:0007669"/>
    <property type="project" value="UniProtKB-SubCell"/>
</dbReference>
<dbReference type="GO" id="GO:0009380">
    <property type="term" value="C:excinuclease repair complex"/>
    <property type="evidence" value="ECO:0007669"/>
    <property type="project" value="InterPro"/>
</dbReference>
<dbReference type="GO" id="GO:0003677">
    <property type="term" value="F:DNA binding"/>
    <property type="evidence" value="ECO:0007669"/>
    <property type="project" value="UniProtKB-UniRule"/>
</dbReference>
<dbReference type="GO" id="GO:0009381">
    <property type="term" value="F:excinuclease ABC activity"/>
    <property type="evidence" value="ECO:0007669"/>
    <property type="project" value="UniProtKB-UniRule"/>
</dbReference>
<dbReference type="GO" id="GO:0006289">
    <property type="term" value="P:nucleotide-excision repair"/>
    <property type="evidence" value="ECO:0007669"/>
    <property type="project" value="UniProtKB-UniRule"/>
</dbReference>
<dbReference type="GO" id="GO:0009432">
    <property type="term" value="P:SOS response"/>
    <property type="evidence" value="ECO:0007669"/>
    <property type="project" value="UniProtKB-UniRule"/>
</dbReference>
<dbReference type="CDD" id="cd10434">
    <property type="entry name" value="GIY-YIG_UvrC_Cho"/>
    <property type="match status" value="1"/>
</dbReference>
<dbReference type="FunFam" id="1.10.150.20:FF:000005">
    <property type="entry name" value="UvrABC system protein C"/>
    <property type="match status" value="1"/>
</dbReference>
<dbReference type="FunFam" id="3.30.420.340:FF:000001">
    <property type="entry name" value="UvrABC system protein C"/>
    <property type="match status" value="1"/>
</dbReference>
<dbReference type="FunFam" id="3.40.1440.10:FF:000001">
    <property type="entry name" value="UvrABC system protein C"/>
    <property type="match status" value="1"/>
</dbReference>
<dbReference type="FunFam" id="4.10.860.10:FF:000002">
    <property type="entry name" value="UvrABC system protein C"/>
    <property type="match status" value="1"/>
</dbReference>
<dbReference type="Gene3D" id="1.10.150.20">
    <property type="entry name" value="5' to 3' exonuclease, C-terminal subdomain"/>
    <property type="match status" value="1"/>
</dbReference>
<dbReference type="Gene3D" id="3.40.1440.10">
    <property type="entry name" value="GIY-YIG endonuclease"/>
    <property type="match status" value="1"/>
</dbReference>
<dbReference type="Gene3D" id="4.10.860.10">
    <property type="entry name" value="UVR domain"/>
    <property type="match status" value="1"/>
</dbReference>
<dbReference type="Gene3D" id="3.30.420.340">
    <property type="entry name" value="UvrC, RNAse H endonuclease domain"/>
    <property type="match status" value="1"/>
</dbReference>
<dbReference type="HAMAP" id="MF_00203">
    <property type="entry name" value="UvrC"/>
    <property type="match status" value="1"/>
</dbReference>
<dbReference type="InterPro" id="IPR000305">
    <property type="entry name" value="GIY-YIG_endonuc"/>
</dbReference>
<dbReference type="InterPro" id="IPR035901">
    <property type="entry name" value="GIY-YIG_endonuc_sf"/>
</dbReference>
<dbReference type="InterPro" id="IPR047296">
    <property type="entry name" value="GIY-YIG_UvrC_Cho"/>
</dbReference>
<dbReference type="InterPro" id="IPR003583">
    <property type="entry name" value="Hlx-hairpin-Hlx_DNA-bd_motif"/>
</dbReference>
<dbReference type="InterPro" id="IPR010994">
    <property type="entry name" value="RuvA_2-like"/>
</dbReference>
<dbReference type="InterPro" id="IPR001943">
    <property type="entry name" value="UVR_dom"/>
</dbReference>
<dbReference type="InterPro" id="IPR036876">
    <property type="entry name" value="UVR_dom_sf"/>
</dbReference>
<dbReference type="InterPro" id="IPR050066">
    <property type="entry name" value="UvrABC_protein_C"/>
</dbReference>
<dbReference type="InterPro" id="IPR004791">
    <property type="entry name" value="UvrC"/>
</dbReference>
<dbReference type="InterPro" id="IPR001162">
    <property type="entry name" value="UvrC_RNase_H_dom"/>
</dbReference>
<dbReference type="InterPro" id="IPR038476">
    <property type="entry name" value="UvrC_RNase_H_dom_sf"/>
</dbReference>
<dbReference type="NCBIfam" id="NF001824">
    <property type="entry name" value="PRK00558.1-5"/>
    <property type="match status" value="1"/>
</dbReference>
<dbReference type="NCBIfam" id="TIGR00194">
    <property type="entry name" value="uvrC"/>
    <property type="match status" value="1"/>
</dbReference>
<dbReference type="PANTHER" id="PTHR30562:SF1">
    <property type="entry name" value="UVRABC SYSTEM PROTEIN C"/>
    <property type="match status" value="1"/>
</dbReference>
<dbReference type="PANTHER" id="PTHR30562">
    <property type="entry name" value="UVRC/OXIDOREDUCTASE"/>
    <property type="match status" value="1"/>
</dbReference>
<dbReference type="Pfam" id="PF01541">
    <property type="entry name" value="GIY-YIG"/>
    <property type="match status" value="1"/>
</dbReference>
<dbReference type="Pfam" id="PF14520">
    <property type="entry name" value="HHH_5"/>
    <property type="match status" value="1"/>
</dbReference>
<dbReference type="Pfam" id="PF02151">
    <property type="entry name" value="UVR"/>
    <property type="match status" value="1"/>
</dbReference>
<dbReference type="Pfam" id="PF22920">
    <property type="entry name" value="UvrC_RNaseH"/>
    <property type="match status" value="1"/>
</dbReference>
<dbReference type="Pfam" id="PF08459">
    <property type="entry name" value="UvrC_RNaseH_dom"/>
    <property type="match status" value="1"/>
</dbReference>
<dbReference type="SMART" id="SM00465">
    <property type="entry name" value="GIYc"/>
    <property type="match status" value="1"/>
</dbReference>
<dbReference type="SMART" id="SM00278">
    <property type="entry name" value="HhH1"/>
    <property type="match status" value="2"/>
</dbReference>
<dbReference type="SUPFAM" id="SSF46600">
    <property type="entry name" value="C-terminal UvrC-binding domain of UvrB"/>
    <property type="match status" value="1"/>
</dbReference>
<dbReference type="SUPFAM" id="SSF82771">
    <property type="entry name" value="GIY-YIG endonuclease"/>
    <property type="match status" value="1"/>
</dbReference>
<dbReference type="SUPFAM" id="SSF47781">
    <property type="entry name" value="RuvA domain 2-like"/>
    <property type="match status" value="1"/>
</dbReference>
<dbReference type="PROSITE" id="PS50164">
    <property type="entry name" value="GIY_YIG"/>
    <property type="match status" value="1"/>
</dbReference>
<dbReference type="PROSITE" id="PS50151">
    <property type="entry name" value="UVR"/>
    <property type="match status" value="1"/>
</dbReference>
<dbReference type="PROSITE" id="PS50165">
    <property type="entry name" value="UVRC"/>
    <property type="match status" value="1"/>
</dbReference>